<evidence type="ECO:0000255" key="1">
    <source>
        <dbReference type="HAMAP-Rule" id="MF_01363"/>
    </source>
</evidence>
<evidence type="ECO:0000305" key="2"/>
<gene>
    <name evidence="1" type="primary">rplU</name>
    <name type="ordered locus">BPEN_096</name>
</gene>
<proteinExistence type="inferred from homology"/>
<comment type="function">
    <text evidence="1">This protein binds to 23S rRNA in the presence of protein L20.</text>
</comment>
<comment type="subunit">
    <text evidence="1">Part of the 50S ribosomal subunit. Contacts protein L20.</text>
</comment>
<comment type="similarity">
    <text evidence="1">Belongs to the bacterial ribosomal protein bL21 family.</text>
</comment>
<dbReference type="EMBL" id="CP000016">
    <property type="protein sequence ID" value="AAZ40738.1"/>
    <property type="molecule type" value="Genomic_DNA"/>
</dbReference>
<dbReference type="RefSeq" id="WP_011282645.1">
    <property type="nucleotide sequence ID" value="NC_007292.1"/>
</dbReference>
<dbReference type="SMR" id="Q493U7"/>
<dbReference type="STRING" id="291272.BPEN_096"/>
<dbReference type="KEGG" id="bpn:BPEN_096"/>
<dbReference type="eggNOG" id="COG0261">
    <property type="taxonomic scope" value="Bacteria"/>
</dbReference>
<dbReference type="HOGENOM" id="CLU_061463_3_3_6"/>
<dbReference type="OrthoDB" id="9813334at2"/>
<dbReference type="Proteomes" id="UP000007794">
    <property type="component" value="Chromosome"/>
</dbReference>
<dbReference type="GO" id="GO:0005737">
    <property type="term" value="C:cytoplasm"/>
    <property type="evidence" value="ECO:0007669"/>
    <property type="project" value="UniProtKB-ARBA"/>
</dbReference>
<dbReference type="GO" id="GO:1990904">
    <property type="term" value="C:ribonucleoprotein complex"/>
    <property type="evidence" value="ECO:0007669"/>
    <property type="project" value="UniProtKB-KW"/>
</dbReference>
<dbReference type="GO" id="GO:0005840">
    <property type="term" value="C:ribosome"/>
    <property type="evidence" value="ECO:0007669"/>
    <property type="project" value="UniProtKB-KW"/>
</dbReference>
<dbReference type="GO" id="GO:0019843">
    <property type="term" value="F:rRNA binding"/>
    <property type="evidence" value="ECO:0007669"/>
    <property type="project" value="UniProtKB-UniRule"/>
</dbReference>
<dbReference type="GO" id="GO:0003735">
    <property type="term" value="F:structural constituent of ribosome"/>
    <property type="evidence" value="ECO:0007669"/>
    <property type="project" value="InterPro"/>
</dbReference>
<dbReference type="GO" id="GO:0006412">
    <property type="term" value="P:translation"/>
    <property type="evidence" value="ECO:0007669"/>
    <property type="project" value="UniProtKB-UniRule"/>
</dbReference>
<dbReference type="HAMAP" id="MF_01363">
    <property type="entry name" value="Ribosomal_bL21"/>
    <property type="match status" value="1"/>
</dbReference>
<dbReference type="InterPro" id="IPR028909">
    <property type="entry name" value="bL21-like"/>
</dbReference>
<dbReference type="InterPro" id="IPR036164">
    <property type="entry name" value="bL21-like_sf"/>
</dbReference>
<dbReference type="InterPro" id="IPR001787">
    <property type="entry name" value="Ribosomal_bL21"/>
</dbReference>
<dbReference type="InterPro" id="IPR018258">
    <property type="entry name" value="Ribosomal_bL21_CS"/>
</dbReference>
<dbReference type="NCBIfam" id="TIGR00061">
    <property type="entry name" value="L21"/>
    <property type="match status" value="1"/>
</dbReference>
<dbReference type="PANTHER" id="PTHR21349">
    <property type="entry name" value="50S RIBOSOMAL PROTEIN L21"/>
    <property type="match status" value="1"/>
</dbReference>
<dbReference type="PANTHER" id="PTHR21349:SF0">
    <property type="entry name" value="LARGE RIBOSOMAL SUBUNIT PROTEIN BL21M"/>
    <property type="match status" value="1"/>
</dbReference>
<dbReference type="Pfam" id="PF00829">
    <property type="entry name" value="Ribosomal_L21p"/>
    <property type="match status" value="1"/>
</dbReference>
<dbReference type="SUPFAM" id="SSF141091">
    <property type="entry name" value="L21p-like"/>
    <property type="match status" value="1"/>
</dbReference>
<dbReference type="PROSITE" id="PS01169">
    <property type="entry name" value="RIBOSOMAL_L21"/>
    <property type="match status" value="1"/>
</dbReference>
<accession>Q493U7</accession>
<reference key="1">
    <citation type="journal article" date="2005" name="Genome Res.">
        <title>Genome sequence of Blochmannia pennsylvanicus indicates parallel evolutionary trends among bacterial mutualists of insects.</title>
        <authorList>
            <person name="Degnan P.H."/>
            <person name="Lazarus A.B."/>
            <person name="Wernegreen J.J."/>
        </authorList>
    </citation>
    <scope>NUCLEOTIDE SEQUENCE [LARGE SCALE GENOMIC DNA]</scope>
    <source>
        <strain>BPEN</strain>
    </source>
</reference>
<name>RL21_BLOPB</name>
<feature type="chain" id="PRO_0000269284" description="Large ribosomal subunit protein bL21">
    <location>
        <begin position="1"/>
        <end position="105"/>
    </location>
</feature>
<keyword id="KW-1185">Reference proteome</keyword>
<keyword id="KW-0687">Ribonucleoprotein</keyword>
<keyword id="KW-0689">Ribosomal protein</keyword>
<keyword id="KW-0694">RNA-binding</keyword>
<keyword id="KW-0699">rRNA-binding</keyword>
<sequence length="105" mass="12384">MYAVFQTGSKQYRVVEGQVIHIERIDLEVGNQVEFNQILLIDSNECLHIGSPFIKKGRIIAEIIAQSLNQKIKIIKFRRRKHFRKFQGHRQCFTTIKIVSIKHKH</sequence>
<organism>
    <name type="scientific">Blochmanniella pennsylvanica (strain BPEN)</name>
    <dbReference type="NCBI Taxonomy" id="291272"/>
    <lineage>
        <taxon>Bacteria</taxon>
        <taxon>Pseudomonadati</taxon>
        <taxon>Pseudomonadota</taxon>
        <taxon>Gammaproteobacteria</taxon>
        <taxon>Enterobacterales</taxon>
        <taxon>Enterobacteriaceae</taxon>
        <taxon>ant endosymbionts</taxon>
        <taxon>Candidatus Blochmanniella</taxon>
    </lineage>
</organism>
<protein>
    <recommendedName>
        <fullName evidence="1">Large ribosomal subunit protein bL21</fullName>
    </recommendedName>
    <alternativeName>
        <fullName evidence="2">50S ribosomal protein L21</fullName>
    </alternativeName>
</protein>